<proteinExistence type="evidence at transcript level"/>
<accession>E5A7D6</accession>
<gene>
    <name evidence="6" type="primary">abl5</name>
    <name type="ORF">LEMA_P087700.1</name>
</gene>
<name>ABL5_LEPMJ</name>
<reference key="1">
    <citation type="journal article" date="2011" name="Nat. Commun.">
        <title>Effector diversification within compartments of the Leptosphaeria maculans genome affected by Repeat-Induced Point mutations.</title>
        <authorList>
            <person name="Rouxel T."/>
            <person name="Grandaubert J."/>
            <person name="Hane J.K."/>
            <person name="Hoede C."/>
            <person name="van de Wouw A.P."/>
            <person name="Couloux A."/>
            <person name="Dominguez V."/>
            <person name="Anthouard V."/>
            <person name="Bally P."/>
            <person name="Bourras S."/>
            <person name="Cozijnsen A.J."/>
            <person name="Ciuffetti L.M."/>
            <person name="Degrave A."/>
            <person name="Dilmaghani A."/>
            <person name="Duret L."/>
            <person name="Fudal I."/>
            <person name="Goodwin S.B."/>
            <person name="Gout L."/>
            <person name="Glaser N."/>
            <person name="Linglin J."/>
            <person name="Kema G.H.J."/>
            <person name="Lapalu N."/>
            <person name="Lawrence C.B."/>
            <person name="May K."/>
            <person name="Meyer M."/>
            <person name="Ollivier B."/>
            <person name="Poulain J."/>
            <person name="Schoch C.L."/>
            <person name="Simon A."/>
            <person name="Spatafora J.W."/>
            <person name="Stachowiak A."/>
            <person name="Turgeon B.G."/>
            <person name="Tyler B.M."/>
            <person name="Vincent D."/>
            <person name="Weissenbach J."/>
            <person name="Amselem J."/>
            <person name="Quesneville H."/>
            <person name="Oliver R.P."/>
            <person name="Wincker P."/>
            <person name="Balesdent M.-H."/>
            <person name="Howlett B.J."/>
        </authorList>
    </citation>
    <scope>NUCLEOTIDE SEQUENCE [LARGE SCALE GENOMIC DNA]</scope>
    <source>
        <strain>JN3 / isolate v23.1.3 / race Av1-4-5-6-7-8</strain>
    </source>
</reference>
<reference key="2">
    <citation type="journal article" date="2019" name="Fungal Genet. Biol.">
        <title>Identification of a gene cluster for the synthesis of the plant hormone abscisic acid in the plant pathogen Leptosphaeria maculans.</title>
        <authorList>
            <person name="Darma R."/>
            <person name="Lutz A."/>
            <person name="Elliott C.E."/>
            <person name="Idnurm A."/>
        </authorList>
    </citation>
    <scope>IDENTIFICATION</scope>
    <scope>INDUCTION</scope>
    <scope>FUNCTION</scope>
</reference>
<evidence type="ECO:0000250" key="1">
    <source>
        <dbReference type="UniProtKB" id="P04798"/>
    </source>
</evidence>
<evidence type="ECO:0000250" key="2">
    <source>
        <dbReference type="UniProtKB" id="Q6H9H9"/>
    </source>
</evidence>
<evidence type="ECO:0000255" key="3"/>
<evidence type="ECO:0000255" key="4">
    <source>
        <dbReference type="PROSITE-ProRule" id="PRU00498"/>
    </source>
</evidence>
<evidence type="ECO:0000269" key="5">
    <source>
    </source>
</evidence>
<evidence type="ECO:0000303" key="6">
    <source>
    </source>
</evidence>
<evidence type="ECO:0000305" key="7"/>
<evidence type="ECO:0000305" key="8">
    <source>
    </source>
</evidence>
<feature type="chain" id="PRO_0000448420" description="Cytochrome P450 monooxygenase abl5">
    <location>
        <begin position="1"/>
        <end position="551"/>
    </location>
</feature>
<feature type="transmembrane region" description="Helical" evidence="3">
    <location>
        <begin position="37"/>
        <end position="57"/>
    </location>
</feature>
<feature type="binding site" description="axial binding residue" evidence="1">
    <location>
        <position position="495"/>
    </location>
    <ligand>
        <name>heme</name>
        <dbReference type="ChEBI" id="CHEBI:30413"/>
    </ligand>
    <ligandPart>
        <name>Fe</name>
        <dbReference type="ChEBI" id="CHEBI:18248"/>
    </ligandPart>
</feature>
<feature type="glycosylation site" description="N-linked (GlcNAc...) asparagine" evidence="4">
    <location>
        <position position="24"/>
    </location>
</feature>
<feature type="glycosylation site" description="N-linked (GlcNAc...) asparagine" evidence="4">
    <location>
        <position position="174"/>
    </location>
</feature>
<feature type="glycosylation site" description="N-linked (GlcNAc...) asparagine" evidence="4">
    <location>
        <position position="218"/>
    </location>
</feature>
<feature type="glycosylation site" description="N-linked (GlcNAc...) asparagine" evidence="4">
    <location>
        <position position="283"/>
    </location>
</feature>
<feature type="glycosylation site" description="N-linked (GlcNAc...) asparagine" evidence="4">
    <location>
        <position position="307"/>
    </location>
</feature>
<feature type="glycosylation site" description="N-linked (GlcNAc...) asparagine" evidence="4">
    <location>
        <position position="441"/>
    </location>
</feature>
<protein>
    <recommendedName>
        <fullName evidence="6">Cytochrome P450 monooxygenase abl5</fullName>
        <ecNumber evidence="8">1.-.-.-</ecNumber>
    </recommendedName>
    <alternativeName>
        <fullName evidence="6">Abscisic acid biosynthesis cluster protein 5</fullName>
    </alternativeName>
</protein>
<comment type="function">
    <text evidence="2 5">Cytochrome P450 monooxygenase; part of the gene cluster that mediates the biosynthesis of abscisic acid (ABA), a phytohormone that acts antagonistically toward salicylic acid (SA), jasmonic acid (JA) and ethylene (ETH) signaling, to impede plant defense responses (PubMed:31034868). The first step of the pathway catalyzes the reaction from farnesyl diphosphate to alpha-ionylideneethane performed by the alpha-ionylideneethane synthase abl3 via a three-step reaction mechanism involving 2 neutral intermediates, beta-farnesene and allofarnesene (By similarity). The cytochrome P450 monooxygenase abl1 might then be involved in the conversion of alpha-ionylideneethane to alpha-ionylideneacetic acid (By similarity). Alpha-ionylideneacetic acid is further converted to abscisic acid in 2 steps involving the cytochrome P450 monooxygenase abl2 and the short-chain dehydrogenase/reductase abl4, via the intermediates 1'-deoxy-ABA or 1',4'-trans-diol-ABA, depending on the order of action of these 2 enzymes (By similarity). Abl2 is responsible for the hydroxylation of carbon atom C-1' and abl4 might be involved in the oxidation of the C-4' carbon atom (By similarity). The cytochrome monooxygenase abl5 seems not essential for the biosynthesis of ABA and its function remains to be identified (PubMed:31034868).</text>
</comment>
<comment type="cofactor">
    <cofactor evidence="1">
        <name>heme</name>
        <dbReference type="ChEBI" id="CHEBI:30413"/>
    </cofactor>
</comment>
<comment type="subcellular location">
    <subcellularLocation>
        <location evidence="3">Membrane</location>
        <topology evidence="3">Single-pass membrane protein</topology>
    </subcellularLocation>
</comment>
<comment type="induction">
    <text evidence="5">Expression is induced during the early biotrophic stage of development (PubMed:31034868). Expression is positively regulated by the ABA cluster-specific transcription regulator abl7 (PubMed:31034868).</text>
</comment>
<comment type="similarity">
    <text evidence="7">Belongs to the cytochrome P450 family.</text>
</comment>
<keyword id="KW-0325">Glycoprotein</keyword>
<keyword id="KW-0349">Heme</keyword>
<keyword id="KW-0408">Iron</keyword>
<keyword id="KW-0472">Membrane</keyword>
<keyword id="KW-0479">Metal-binding</keyword>
<keyword id="KW-0503">Monooxygenase</keyword>
<keyword id="KW-0560">Oxidoreductase</keyword>
<keyword id="KW-1185">Reference proteome</keyword>
<keyword id="KW-0812">Transmembrane</keyword>
<keyword id="KW-1133">Transmembrane helix</keyword>
<organism>
    <name type="scientific">Leptosphaeria maculans (strain JN3 / isolate v23.1.3 / race Av1-4-5-6-7-8)</name>
    <name type="common">Blackleg fungus</name>
    <name type="synonym">Phoma lingam</name>
    <dbReference type="NCBI Taxonomy" id="985895"/>
    <lineage>
        <taxon>Eukaryota</taxon>
        <taxon>Fungi</taxon>
        <taxon>Dikarya</taxon>
        <taxon>Ascomycota</taxon>
        <taxon>Pezizomycotina</taxon>
        <taxon>Dothideomycetes</taxon>
        <taxon>Pleosporomycetidae</taxon>
        <taxon>Pleosporales</taxon>
        <taxon>Pleosporineae</taxon>
        <taxon>Leptosphaeriaceae</taxon>
        <taxon>Plenodomus</taxon>
        <taxon>Plenodomus lingam/Leptosphaeria maculans species complex</taxon>
    </lineage>
</organism>
<sequence length="551" mass="61894">MDSVRTFEACFLSTAAEITFFLKNITTTGNRAQSTKVVLNTLTAIVVVWICYRAVIYPKFISSLRHLPTAKRKYPLIGYGPAQFANSRGELFLEMAKAIPNEGLIRFHGFLETENLLLTSPEAIQEVLVKNSYNFIKPRGAKALFDRFLGSEVLFASEGPNHRNSKKHMQPPFNLSKVKILYSMFWDKAVKMSDDIGRSVIPSEKEILVTDVDMHAHNATLDAVMRALFGEKIEKSPYKHEILRLLDSVLGGSWDVTAYFMMTAFLPLWTLKLIPGGINDRVNFSSYRLRQSVRAFLNERKDESGSNKSDDIAMEMANSDYFTDDELVANLLGLMMAGIEPTAAGFVWIAWYLAIHPDWQTKVRNELKANIAHRFFTDDPTSFDAASVLESLPILNAVCNEGLRLKPPAPTSNRIAKFDTTILGHPVKAGTRIFISPFVSNRSEEFWGLTAAMYDPSRWLGDQKSGRKEVYNSRGGAATSTHCGFLPFLHGPRKCIGSIYAQAEMRAFIACLVGRFEFEMADKEEEMISAGILTSKPKGGLKLRLHKVKKW</sequence>
<dbReference type="EC" id="1.-.-.-" evidence="8"/>
<dbReference type="EMBL" id="FP929136">
    <property type="protein sequence ID" value="CBX99531.1"/>
    <property type="molecule type" value="Genomic_DNA"/>
</dbReference>
<dbReference type="RefSeq" id="XP_003843010.1">
    <property type="nucleotide sequence ID" value="XM_003842962.1"/>
</dbReference>
<dbReference type="SMR" id="E5A7D6"/>
<dbReference type="FunCoup" id="E5A7D6">
    <property type="interactions" value="1363"/>
</dbReference>
<dbReference type="STRING" id="985895.E5A7D6"/>
<dbReference type="GlyCosmos" id="E5A7D6">
    <property type="glycosylation" value="6 sites, No reported glycans"/>
</dbReference>
<dbReference type="EnsemblFungi" id="CBX99531">
    <property type="protein sequence ID" value="CBX99531"/>
    <property type="gene ID" value="LEMA_P087700.1"/>
</dbReference>
<dbReference type="GeneID" id="13289207"/>
<dbReference type="VEuPathDB" id="FungiDB:LEMA_P087700.1"/>
<dbReference type="eggNOG" id="KOG0157">
    <property type="taxonomic scope" value="Eukaryota"/>
</dbReference>
<dbReference type="HOGENOM" id="CLU_001570_5_11_1"/>
<dbReference type="InParanoid" id="E5A7D6"/>
<dbReference type="OMA" id="GEVCITW"/>
<dbReference type="OrthoDB" id="1470350at2759"/>
<dbReference type="Proteomes" id="UP000002668">
    <property type="component" value="Genome"/>
</dbReference>
<dbReference type="GO" id="GO:0016020">
    <property type="term" value="C:membrane"/>
    <property type="evidence" value="ECO:0007669"/>
    <property type="project" value="UniProtKB-SubCell"/>
</dbReference>
<dbReference type="GO" id="GO:0020037">
    <property type="term" value="F:heme binding"/>
    <property type="evidence" value="ECO:0007669"/>
    <property type="project" value="InterPro"/>
</dbReference>
<dbReference type="GO" id="GO:0005506">
    <property type="term" value="F:iron ion binding"/>
    <property type="evidence" value="ECO:0007669"/>
    <property type="project" value="InterPro"/>
</dbReference>
<dbReference type="GO" id="GO:0004497">
    <property type="term" value="F:monooxygenase activity"/>
    <property type="evidence" value="ECO:0007669"/>
    <property type="project" value="UniProtKB-KW"/>
</dbReference>
<dbReference type="GO" id="GO:0016705">
    <property type="term" value="F:oxidoreductase activity, acting on paired donors, with incorporation or reduction of molecular oxygen"/>
    <property type="evidence" value="ECO:0007669"/>
    <property type="project" value="InterPro"/>
</dbReference>
<dbReference type="Gene3D" id="1.10.630.10">
    <property type="entry name" value="Cytochrome P450"/>
    <property type="match status" value="1"/>
</dbReference>
<dbReference type="InterPro" id="IPR001128">
    <property type="entry name" value="Cyt_P450"/>
</dbReference>
<dbReference type="InterPro" id="IPR002401">
    <property type="entry name" value="Cyt_P450_E_grp-I"/>
</dbReference>
<dbReference type="InterPro" id="IPR036396">
    <property type="entry name" value="Cyt_P450_sf"/>
</dbReference>
<dbReference type="InterPro" id="IPR050121">
    <property type="entry name" value="Cytochrome_P450_monoxygenase"/>
</dbReference>
<dbReference type="PANTHER" id="PTHR24305">
    <property type="entry name" value="CYTOCHROME P450"/>
    <property type="match status" value="1"/>
</dbReference>
<dbReference type="PANTHER" id="PTHR24305:SF166">
    <property type="entry name" value="CYTOCHROME P450 12A4, MITOCHONDRIAL-RELATED"/>
    <property type="match status" value="1"/>
</dbReference>
<dbReference type="Pfam" id="PF00067">
    <property type="entry name" value="p450"/>
    <property type="match status" value="1"/>
</dbReference>
<dbReference type="PRINTS" id="PR00463">
    <property type="entry name" value="EP450I"/>
</dbReference>
<dbReference type="PRINTS" id="PR00385">
    <property type="entry name" value="P450"/>
</dbReference>
<dbReference type="SUPFAM" id="SSF48264">
    <property type="entry name" value="Cytochrome P450"/>
    <property type="match status" value="1"/>
</dbReference>